<comment type="similarity">
    <text evidence="1">Belongs to the bacterial ribosomal protein bL28 family.</text>
</comment>
<gene>
    <name evidence="1" type="primary">rpmB</name>
    <name type="ordered locus">Sbal195_0389</name>
</gene>
<sequence length="78" mass="9113">MSRVCQVTGKKPMVGNNRSHAKNATRRRFLPNLQNHRFWLEEEKRFVQLRVSTKGIRLIDKKGIEVVVAELRARGEKV</sequence>
<accession>A9KY05</accession>
<evidence type="ECO:0000255" key="1">
    <source>
        <dbReference type="HAMAP-Rule" id="MF_00373"/>
    </source>
</evidence>
<evidence type="ECO:0000256" key="2">
    <source>
        <dbReference type="SAM" id="MobiDB-lite"/>
    </source>
</evidence>
<evidence type="ECO:0000305" key="3"/>
<reference key="1">
    <citation type="submission" date="2007-11" db="EMBL/GenBank/DDBJ databases">
        <title>Complete sequence of chromosome of Shewanella baltica OS195.</title>
        <authorList>
            <consortium name="US DOE Joint Genome Institute"/>
            <person name="Copeland A."/>
            <person name="Lucas S."/>
            <person name="Lapidus A."/>
            <person name="Barry K."/>
            <person name="Glavina del Rio T."/>
            <person name="Dalin E."/>
            <person name="Tice H."/>
            <person name="Pitluck S."/>
            <person name="Chain P."/>
            <person name="Malfatti S."/>
            <person name="Shin M."/>
            <person name="Vergez L."/>
            <person name="Schmutz J."/>
            <person name="Larimer F."/>
            <person name="Land M."/>
            <person name="Hauser L."/>
            <person name="Kyrpides N."/>
            <person name="Kim E."/>
            <person name="Brettar I."/>
            <person name="Rodrigues J."/>
            <person name="Konstantinidis K."/>
            <person name="Klappenbach J."/>
            <person name="Hofle M."/>
            <person name="Tiedje J."/>
            <person name="Richardson P."/>
        </authorList>
    </citation>
    <scope>NUCLEOTIDE SEQUENCE [LARGE SCALE GENOMIC DNA]</scope>
    <source>
        <strain>OS195</strain>
    </source>
</reference>
<feature type="chain" id="PRO_1000079862" description="Large ribosomal subunit protein bL28">
    <location>
        <begin position="1"/>
        <end position="78"/>
    </location>
</feature>
<feature type="region of interest" description="Disordered" evidence="2">
    <location>
        <begin position="1"/>
        <end position="21"/>
    </location>
</feature>
<organism>
    <name type="scientific">Shewanella baltica (strain OS195)</name>
    <dbReference type="NCBI Taxonomy" id="399599"/>
    <lineage>
        <taxon>Bacteria</taxon>
        <taxon>Pseudomonadati</taxon>
        <taxon>Pseudomonadota</taxon>
        <taxon>Gammaproteobacteria</taxon>
        <taxon>Alteromonadales</taxon>
        <taxon>Shewanellaceae</taxon>
        <taxon>Shewanella</taxon>
    </lineage>
</organism>
<keyword id="KW-0687">Ribonucleoprotein</keyword>
<keyword id="KW-0689">Ribosomal protein</keyword>
<name>RL28_SHEB9</name>
<dbReference type="EMBL" id="CP000891">
    <property type="protein sequence ID" value="ABX47570.1"/>
    <property type="molecule type" value="Genomic_DNA"/>
</dbReference>
<dbReference type="RefSeq" id="WP_006079870.1">
    <property type="nucleotide sequence ID" value="NC_009997.1"/>
</dbReference>
<dbReference type="SMR" id="A9KY05"/>
<dbReference type="GeneID" id="94729700"/>
<dbReference type="KEGG" id="sbn:Sbal195_0389"/>
<dbReference type="HOGENOM" id="CLU_064548_3_1_6"/>
<dbReference type="Proteomes" id="UP000000770">
    <property type="component" value="Chromosome"/>
</dbReference>
<dbReference type="GO" id="GO:0022625">
    <property type="term" value="C:cytosolic large ribosomal subunit"/>
    <property type="evidence" value="ECO:0007669"/>
    <property type="project" value="TreeGrafter"/>
</dbReference>
<dbReference type="GO" id="GO:0003735">
    <property type="term" value="F:structural constituent of ribosome"/>
    <property type="evidence" value="ECO:0007669"/>
    <property type="project" value="InterPro"/>
</dbReference>
<dbReference type="GO" id="GO:0006412">
    <property type="term" value="P:translation"/>
    <property type="evidence" value="ECO:0007669"/>
    <property type="project" value="UniProtKB-UniRule"/>
</dbReference>
<dbReference type="FunFam" id="2.30.170.40:FF:000001">
    <property type="entry name" value="50S ribosomal protein L28"/>
    <property type="match status" value="1"/>
</dbReference>
<dbReference type="Gene3D" id="2.30.170.40">
    <property type="entry name" value="Ribosomal protein L28/L24"/>
    <property type="match status" value="1"/>
</dbReference>
<dbReference type="HAMAP" id="MF_00373">
    <property type="entry name" value="Ribosomal_bL28"/>
    <property type="match status" value="1"/>
</dbReference>
<dbReference type="InterPro" id="IPR026569">
    <property type="entry name" value="Ribosomal_bL28"/>
</dbReference>
<dbReference type="InterPro" id="IPR034704">
    <property type="entry name" value="Ribosomal_bL28/bL31-like_sf"/>
</dbReference>
<dbReference type="InterPro" id="IPR001383">
    <property type="entry name" value="Ribosomal_bL28_bact-type"/>
</dbReference>
<dbReference type="InterPro" id="IPR037147">
    <property type="entry name" value="Ribosomal_bL28_sf"/>
</dbReference>
<dbReference type="NCBIfam" id="TIGR00009">
    <property type="entry name" value="L28"/>
    <property type="match status" value="1"/>
</dbReference>
<dbReference type="PANTHER" id="PTHR13528">
    <property type="entry name" value="39S RIBOSOMAL PROTEIN L28, MITOCHONDRIAL"/>
    <property type="match status" value="1"/>
</dbReference>
<dbReference type="PANTHER" id="PTHR13528:SF2">
    <property type="entry name" value="LARGE RIBOSOMAL SUBUNIT PROTEIN BL28M"/>
    <property type="match status" value="1"/>
</dbReference>
<dbReference type="Pfam" id="PF00830">
    <property type="entry name" value="Ribosomal_L28"/>
    <property type="match status" value="1"/>
</dbReference>
<dbReference type="SUPFAM" id="SSF143800">
    <property type="entry name" value="L28p-like"/>
    <property type="match status" value="1"/>
</dbReference>
<proteinExistence type="inferred from homology"/>
<protein>
    <recommendedName>
        <fullName evidence="1">Large ribosomal subunit protein bL28</fullName>
    </recommendedName>
    <alternativeName>
        <fullName evidence="3">50S ribosomal protein L28</fullName>
    </alternativeName>
</protein>